<dbReference type="EMBL" id="CP000102">
    <property type="protein sequence ID" value="ABC57282.1"/>
    <property type="molecule type" value="Genomic_DNA"/>
</dbReference>
<dbReference type="SMR" id="Q2NFX1"/>
<dbReference type="STRING" id="339860.Msp_0894"/>
<dbReference type="KEGG" id="mst:Msp_0894"/>
<dbReference type="eggNOG" id="arCOG00782">
    <property type="taxonomic scope" value="Archaea"/>
</dbReference>
<dbReference type="HOGENOM" id="CLU_177289_2_2_2"/>
<dbReference type="OrthoDB" id="5615at2157"/>
<dbReference type="Proteomes" id="UP000001931">
    <property type="component" value="Chromosome"/>
</dbReference>
<dbReference type="GO" id="GO:0022627">
    <property type="term" value="C:cytosolic small ribosomal subunit"/>
    <property type="evidence" value="ECO:0007669"/>
    <property type="project" value="TreeGrafter"/>
</dbReference>
<dbReference type="GO" id="GO:0019843">
    <property type="term" value="F:rRNA binding"/>
    <property type="evidence" value="ECO:0007669"/>
    <property type="project" value="UniProtKB-UniRule"/>
</dbReference>
<dbReference type="GO" id="GO:0003735">
    <property type="term" value="F:structural constituent of ribosome"/>
    <property type="evidence" value="ECO:0007669"/>
    <property type="project" value="InterPro"/>
</dbReference>
<dbReference type="GO" id="GO:0008270">
    <property type="term" value="F:zinc ion binding"/>
    <property type="evidence" value="ECO:0007669"/>
    <property type="project" value="UniProtKB-UniRule"/>
</dbReference>
<dbReference type="GO" id="GO:0002181">
    <property type="term" value="P:cytoplasmic translation"/>
    <property type="evidence" value="ECO:0007669"/>
    <property type="project" value="TreeGrafter"/>
</dbReference>
<dbReference type="FunFam" id="4.10.830.10:FF:000002">
    <property type="entry name" value="40S ribosomal protein S29"/>
    <property type="match status" value="1"/>
</dbReference>
<dbReference type="Gene3D" id="4.10.830.10">
    <property type="entry name" value="30s Ribosomal Protein S14, Chain N"/>
    <property type="match status" value="1"/>
</dbReference>
<dbReference type="HAMAP" id="MF_01364_A">
    <property type="entry name" value="Ribosomal_uS14_2_A"/>
    <property type="match status" value="1"/>
</dbReference>
<dbReference type="InterPro" id="IPR001209">
    <property type="entry name" value="Ribosomal_uS14"/>
</dbReference>
<dbReference type="InterPro" id="IPR023676">
    <property type="entry name" value="Ribosomal_uS14_arc"/>
</dbReference>
<dbReference type="InterPro" id="IPR018271">
    <property type="entry name" value="Ribosomal_uS14_CS"/>
</dbReference>
<dbReference type="InterPro" id="IPR039744">
    <property type="entry name" value="RIbosomal_uS14_euk_arc"/>
</dbReference>
<dbReference type="InterPro" id="IPR043140">
    <property type="entry name" value="Ribosomal_uS14_sf"/>
</dbReference>
<dbReference type="NCBIfam" id="NF004424">
    <property type="entry name" value="PRK05766.1"/>
    <property type="match status" value="1"/>
</dbReference>
<dbReference type="PANTHER" id="PTHR12010">
    <property type="entry name" value="40S RIBOSOMAL PROTEIN S29"/>
    <property type="match status" value="1"/>
</dbReference>
<dbReference type="PANTHER" id="PTHR12010:SF2">
    <property type="entry name" value="40S RIBOSOMAL PROTEIN S29"/>
    <property type="match status" value="1"/>
</dbReference>
<dbReference type="Pfam" id="PF00253">
    <property type="entry name" value="Ribosomal_S14"/>
    <property type="match status" value="1"/>
</dbReference>
<dbReference type="PROSITE" id="PS00527">
    <property type="entry name" value="RIBOSOMAL_S14"/>
    <property type="match status" value="1"/>
</dbReference>
<protein>
    <recommendedName>
        <fullName evidence="1">Small ribosomal subunit protein uS14</fullName>
    </recommendedName>
    <alternativeName>
        <fullName evidence="2">30S ribosomal protein S14 type Z</fullName>
    </alternativeName>
</protein>
<feature type="chain" id="PRO_0000269165" description="Small ribosomal subunit protein uS14">
    <location>
        <begin position="1"/>
        <end position="47"/>
    </location>
</feature>
<feature type="binding site" evidence="1">
    <location>
        <position position="12"/>
    </location>
    <ligand>
        <name>Zn(2+)</name>
        <dbReference type="ChEBI" id="CHEBI:29105"/>
    </ligand>
</feature>
<feature type="binding site" evidence="1">
    <location>
        <position position="15"/>
    </location>
    <ligand>
        <name>Zn(2+)</name>
        <dbReference type="ChEBI" id="CHEBI:29105"/>
    </ligand>
</feature>
<feature type="binding site" evidence="1">
    <location>
        <position position="30"/>
    </location>
    <ligand>
        <name>Zn(2+)</name>
        <dbReference type="ChEBI" id="CHEBI:29105"/>
    </ligand>
</feature>
<feature type="binding site" evidence="1">
    <location>
        <position position="33"/>
    </location>
    <ligand>
        <name>Zn(2+)</name>
        <dbReference type="ChEBI" id="CHEBI:29105"/>
    </ligand>
</feature>
<gene>
    <name evidence="1" type="primary">rps14</name>
    <name type="ordered locus">Msp_0894</name>
</gene>
<accession>Q2NFX1</accession>
<organism>
    <name type="scientific">Methanosphaera stadtmanae (strain ATCC 43021 / DSM 3091 / JCM 11832 / MCB-3)</name>
    <dbReference type="NCBI Taxonomy" id="339860"/>
    <lineage>
        <taxon>Archaea</taxon>
        <taxon>Methanobacteriati</taxon>
        <taxon>Methanobacteriota</taxon>
        <taxon>Methanomada group</taxon>
        <taxon>Methanobacteria</taxon>
        <taxon>Methanobacteriales</taxon>
        <taxon>Methanobacteriaceae</taxon>
        <taxon>Methanosphaera</taxon>
    </lineage>
</organism>
<evidence type="ECO:0000255" key="1">
    <source>
        <dbReference type="HAMAP-Rule" id="MF_01364"/>
    </source>
</evidence>
<evidence type="ECO:0000305" key="2"/>
<reference key="1">
    <citation type="journal article" date="2006" name="J. Bacteriol.">
        <title>The genome sequence of Methanosphaera stadtmanae reveals why this human intestinal archaeon is restricted to methanol and H2 for methane formation and ATP synthesis.</title>
        <authorList>
            <person name="Fricke W.F."/>
            <person name="Seedorf H."/>
            <person name="Henne A."/>
            <person name="Kruer M."/>
            <person name="Liesegang H."/>
            <person name="Hedderich R."/>
            <person name="Gottschalk G."/>
            <person name="Thauer R.K."/>
        </authorList>
    </citation>
    <scope>NUCLEOTIDE SEQUENCE [LARGE SCALE GENOMIC DNA]</scope>
    <source>
        <strain>ATCC 43021 / DSM 3091 / JCM 11832 / MCB-3</strain>
    </source>
</reference>
<sequence>MARKYGKAARKCSRCGDHSAIVRRYGLNLCRQCFREIAPKIGFKKYN</sequence>
<keyword id="KW-0479">Metal-binding</keyword>
<keyword id="KW-1185">Reference proteome</keyword>
<keyword id="KW-0687">Ribonucleoprotein</keyword>
<keyword id="KW-0689">Ribosomal protein</keyword>
<keyword id="KW-0694">RNA-binding</keyword>
<keyword id="KW-0699">rRNA-binding</keyword>
<keyword id="KW-0862">Zinc</keyword>
<comment type="function">
    <text evidence="1">Binds 16S rRNA, required for the assembly of 30S particles.</text>
</comment>
<comment type="cofactor">
    <cofactor evidence="1">
        <name>Zn(2+)</name>
        <dbReference type="ChEBI" id="CHEBI:29105"/>
    </cofactor>
    <text evidence="1">Binds 1 zinc ion per subunit.</text>
</comment>
<comment type="subunit">
    <text evidence="1">Part of the 30S ribosomal subunit.</text>
</comment>
<comment type="similarity">
    <text evidence="1">Belongs to the universal ribosomal protein uS14 family. Zinc-binding uS14 subfamily.</text>
</comment>
<proteinExistence type="inferred from homology"/>
<name>RS14Z_METST</name>